<organism>
    <name type="scientific">Pseudomonas savastanoi pv. phaseolicola (strain 1448A / Race 6)</name>
    <name type="common">Pseudomonas syringae pv. phaseolicola (strain 1448A / Race 6)</name>
    <dbReference type="NCBI Taxonomy" id="264730"/>
    <lineage>
        <taxon>Bacteria</taxon>
        <taxon>Pseudomonadati</taxon>
        <taxon>Pseudomonadota</taxon>
        <taxon>Gammaproteobacteria</taxon>
        <taxon>Pseudomonadales</taxon>
        <taxon>Pseudomonadaceae</taxon>
        <taxon>Pseudomonas</taxon>
    </lineage>
</organism>
<gene>
    <name evidence="1" type="primary">rplU</name>
    <name type="ordered locus">PSPPH_0713</name>
</gene>
<sequence>MYAVIVTGGKQYKVAPGEYLKIEKLEIATGESVTFDRVLLVGNGDDVNIGAPVVAGATVVAEVVSQGRHDKVRIIKFRRRKHHMKRMGHRQWYTEIKITGIQA</sequence>
<name>RL21_PSE14</name>
<dbReference type="EMBL" id="CP000058">
    <property type="protein sequence ID" value="AAZ35659.1"/>
    <property type="status" value="ALT_INIT"/>
    <property type="molecule type" value="Genomic_DNA"/>
</dbReference>
<dbReference type="RefSeq" id="WP_002551971.1">
    <property type="nucleotide sequence ID" value="NC_005773.3"/>
</dbReference>
<dbReference type="SMR" id="Q48NL4"/>
<dbReference type="GeneID" id="96217043"/>
<dbReference type="KEGG" id="psp:PSPPH_0713"/>
<dbReference type="eggNOG" id="COG0261">
    <property type="taxonomic scope" value="Bacteria"/>
</dbReference>
<dbReference type="HOGENOM" id="CLU_061463_3_1_6"/>
<dbReference type="Proteomes" id="UP000000551">
    <property type="component" value="Chromosome"/>
</dbReference>
<dbReference type="GO" id="GO:0005737">
    <property type="term" value="C:cytoplasm"/>
    <property type="evidence" value="ECO:0007669"/>
    <property type="project" value="UniProtKB-ARBA"/>
</dbReference>
<dbReference type="GO" id="GO:1990904">
    <property type="term" value="C:ribonucleoprotein complex"/>
    <property type="evidence" value="ECO:0007669"/>
    <property type="project" value="UniProtKB-KW"/>
</dbReference>
<dbReference type="GO" id="GO:0005840">
    <property type="term" value="C:ribosome"/>
    <property type="evidence" value="ECO:0007669"/>
    <property type="project" value="UniProtKB-KW"/>
</dbReference>
<dbReference type="GO" id="GO:0019843">
    <property type="term" value="F:rRNA binding"/>
    <property type="evidence" value="ECO:0007669"/>
    <property type="project" value="UniProtKB-UniRule"/>
</dbReference>
<dbReference type="GO" id="GO:0003735">
    <property type="term" value="F:structural constituent of ribosome"/>
    <property type="evidence" value="ECO:0007669"/>
    <property type="project" value="InterPro"/>
</dbReference>
<dbReference type="GO" id="GO:0006412">
    <property type="term" value="P:translation"/>
    <property type="evidence" value="ECO:0007669"/>
    <property type="project" value="UniProtKB-UniRule"/>
</dbReference>
<dbReference type="HAMAP" id="MF_01363">
    <property type="entry name" value="Ribosomal_bL21"/>
    <property type="match status" value="1"/>
</dbReference>
<dbReference type="InterPro" id="IPR028909">
    <property type="entry name" value="bL21-like"/>
</dbReference>
<dbReference type="InterPro" id="IPR036164">
    <property type="entry name" value="bL21-like_sf"/>
</dbReference>
<dbReference type="InterPro" id="IPR001787">
    <property type="entry name" value="Ribosomal_bL21"/>
</dbReference>
<dbReference type="InterPro" id="IPR018258">
    <property type="entry name" value="Ribosomal_bL21_CS"/>
</dbReference>
<dbReference type="NCBIfam" id="TIGR00061">
    <property type="entry name" value="L21"/>
    <property type="match status" value="1"/>
</dbReference>
<dbReference type="PANTHER" id="PTHR21349">
    <property type="entry name" value="50S RIBOSOMAL PROTEIN L21"/>
    <property type="match status" value="1"/>
</dbReference>
<dbReference type="PANTHER" id="PTHR21349:SF0">
    <property type="entry name" value="LARGE RIBOSOMAL SUBUNIT PROTEIN BL21M"/>
    <property type="match status" value="1"/>
</dbReference>
<dbReference type="Pfam" id="PF00829">
    <property type="entry name" value="Ribosomal_L21p"/>
    <property type="match status" value="1"/>
</dbReference>
<dbReference type="SUPFAM" id="SSF141091">
    <property type="entry name" value="L21p-like"/>
    <property type="match status" value="1"/>
</dbReference>
<dbReference type="PROSITE" id="PS01169">
    <property type="entry name" value="RIBOSOMAL_L21"/>
    <property type="match status" value="1"/>
</dbReference>
<accession>Q48NL4</accession>
<reference key="1">
    <citation type="journal article" date="2005" name="J. Bacteriol.">
        <title>Whole-genome sequence analysis of Pseudomonas syringae pv. phaseolicola 1448A reveals divergence among pathovars in genes involved in virulence and transposition.</title>
        <authorList>
            <person name="Joardar V."/>
            <person name="Lindeberg M."/>
            <person name="Jackson R.W."/>
            <person name="Selengut J."/>
            <person name="Dodson R."/>
            <person name="Brinkac L.M."/>
            <person name="Daugherty S.C."/>
            <person name="DeBoy R.T."/>
            <person name="Durkin A.S."/>
            <person name="Gwinn Giglio M."/>
            <person name="Madupu R."/>
            <person name="Nelson W.C."/>
            <person name="Rosovitz M.J."/>
            <person name="Sullivan S.A."/>
            <person name="Crabtree J."/>
            <person name="Creasy T."/>
            <person name="Davidsen T.M."/>
            <person name="Haft D.H."/>
            <person name="Zafar N."/>
            <person name="Zhou L."/>
            <person name="Halpin R."/>
            <person name="Holley T."/>
            <person name="Khouri H.M."/>
            <person name="Feldblyum T.V."/>
            <person name="White O."/>
            <person name="Fraser C.M."/>
            <person name="Chatterjee A.K."/>
            <person name="Cartinhour S."/>
            <person name="Schneider D."/>
            <person name="Mansfield J.W."/>
            <person name="Collmer A."/>
            <person name="Buell R."/>
        </authorList>
    </citation>
    <scope>NUCLEOTIDE SEQUENCE [LARGE SCALE GENOMIC DNA]</scope>
    <source>
        <strain>1448A / Race 6</strain>
    </source>
</reference>
<evidence type="ECO:0000255" key="1">
    <source>
        <dbReference type="HAMAP-Rule" id="MF_01363"/>
    </source>
</evidence>
<evidence type="ECO:0000305" key="2"/>
<keyword id="KW-0687">Ribonucleoprotein</keyword>
<keyword id="KW-0689">Ribosomal protein</keyword>
<keyword id="KW-0694">RNA-binding</keyword>
<keyword id="KW-0699">rRNA-binding</keyword>
<proteinExistence type="inferred from homology"/>
<comment type="function">
    <text evidence="1">This protein binds to 23S rRNA in the presence of protein L20.</text>
</comment>
<comment type="subunit">
    <text evidence="1">Part of the 50S ribosomal subunit. Contacts protein L20.</text>
</comment>
<comment type="similarity">
    <text evidence="1">Belongs to the bacterial ribosomal protein bL21 family.</text>
</comment>
<comment type="sequence caution" evidence="2">
    <conflict type="erroneous initiation">
        <sequence resource="EMBL-CDS" id="AAZ35659"/>
    </conflict>
</comment>
<protein>
    <recommendedName>
        <fullName evidence="1">Large ribosomal subunit protein bL21</fullName>
    </recommendedName>
    <alternativeName>
        <fullName evidence="2">50S ribosomal protein L21</fullName>
    </alternativeName>
</protein>
<feature type="chain" id="PRO_0000270712" description="Large ribosomal subunit protein bL21">
    <location>
        <begin position="1"/>
        <end position="103"/>
    </location>
</feature>